<comment type="catalytic activity">
    <reaction evidence="4">
        <text>S-ubiquitinyl-[E2 ubiquitin-conjugating enzyme]-L-cysteine + [acceptor protein]-L-lysine = [E2 ubiquitin-conjugating enzyme]-L-cysteine + N(6)-ubiquitinyl-[acceptor protein]-L-lysine.</text>
        <dbReference type="EC" id="2.3.2.27"/>
    </reaction>
</comment>
<comment type="pathway">
    <text>Protein modification; protein ubiquitination.</text>
</comment>
<comment type="subcellular location">
    <subcellularLocation>
        <location evidence="4">Membrane</location>
        <topology evidence="4">Single-pass membrane protein</topology>
    </subcellularLocation>
</comment>
<comment type="domain">
    <text evidence="1">The RING-type zinc finger domain mediates binding to an E2 ubiquitin-conjugating enzyme.</text>
</comment>
<comment type="similarity">
    <text evidence="4">Belongs to the RING-type zinc finger family. ATL subfamily.</text>
</comment>
<organism>
    <name type="scientific">Arabidopsis thaliana</name>
    <name type="common">Mouse-ear cress</name>
    <dbReference type="NCBI Taxonomy" id="3702"/>
    <lineage>
        <taxon>Eukaryota</taxon>
        <taxon>Viridiplantae</taxon>
        <taxon>Streptophyta</taxon>
        <taxon>Embryophyta</taxon>
        <taxon>Tracheophyta</taxon>
        <taxon>Spermatophyta</taxon>
        <taxon>Magnoliopsida</taxon>
        <taxon>eudicotyledons</taxon>
        <taxon>Gunneridae</taxon>
        <taxon>Pentapetalae</taxon>
        <taxon>rosids</taxon>
        <taxon>malvids</taxon>
        <taxon>Brassicales</taxon>
        <taxon>Brassicaceae</taxon>
        <taxon>Camelineae</taxon>
        <taxon>Arabidopsis</taxon>
    </lineage>
</organism>
<feature type="signal peptide" evidence="2">
    <location>
        <begin position="1"/>
        <end position="19"/>
    </location>
</feature>
<feature type="chain" id="PRO_0000030702" description="RING-H2 finger protein ATL81">
    <location>
        <begin position="20"/>
        <end position="332"/>
    </location>
</feature>
<feature type="transmembrane region" description="Helical" evidence="2">
    <location>
        <begin position="76"/>
        <end position="96"/>
    </location>
</feature>
<feature type="zinc finger region" description="RING-type; atypical" evidence="3">
    <location>
        <begin position="154"/>
        <end position="196"/>
    </location>
</feature>
<dbReference type="EC" id="2.3.2.27" evidence="4"/>
<dbReference type="EMBL" id="AC007767">
    <property type="protein sequence ID" value="AAF81333.1"/>
    <property type="molecule type" value="Genomic_DNA"/>
</dbReference>
<dbReference type="EMBL" id="AC084110">
    <property type="protein sequence ID" value="AAG60172.1"/>
    <property type="molecule type" value="Genomic_DNA"/>
</dbReference>
<dbReference type="EMBL" id="CP002684">
    <property type="protein sequence ID" value="AEE31469.1"/>
    <property type="molecule type" value="Genomic_DNA"/>
</dbReference>
<dbReference type="EMBL" id="DQ487502">
    <property type="protein sequence ID" value="ABF59330.1"/>
    <property type="molecule type" value="Genomic_DNA"/>
</dbReference>
<dbReference type="EMBL" id="EF183179">
    <property type="status" value="NOT_ANNOTATED_CDS"/>
    <property type="molecule type" value="mRNA"/>
</dbReference>
<dbReference type="PIR" id="E86448">
    <property type="entry name" value="E86448"/>
</dbReference>
<dbReference type="SMR" id="Q9LQM2"/>
<dbReference type="STRING" id="3702.Q9LQM2"/>
<dbReference type="PaxDb" id="3702-AT1G32361.1"/>
<dbReference type="ProteomicsDB" id="246651"/>
<dbReference type="EnsemblPlants" id="AT1G32361.1">
    <property type="protein sequence ID" value="AT1G32361.1"/>
    <property type="gene ID" value="AT1G32361"/>
</dbReference>
<dbReference type="Gramene" id="AT1G32361.1">
    <property type="protein sequence ID" value="AT1G32361.1"/>
    <property type="gene ID" value="AT1G32361"/>
</dbReference>
<dbReference type="KEGG" id="ath:AT1G32361"/>
<dbReference type="Araport" id="AT1G32361"/>
<dbReference type="TAIR" id="AT1G32361">
    <property type="gene designation" value="ATL1F"/>
</dbReference>
<dbReference type="eggNOG" id="KOG0800">
    <property type="taxonomic scope" value="Eukaryota"/>
</dbReference>
<dbReference type="HOGENOM" id="CLU_035191_3_1_1"/>
<dbReference type="InParanoid" id="Q9LQM2"/>
<dbReference type="OMA" id="LYCVRGT"/>
<dbReference type="PhylomeDB" id="Q9LQM2"/>
<dbReference type="UniPathway" id="UPA00143"/>
<dbReference type="PRO" id="PR:Q9LQM2"/>
<dbReference type="Proteomes" id="UP000006548">
    <property type="component" value="Chromosome 1"/>
</dbReference>
<dbReference type="ExpressionAtlas" id="Q9LQM2">
    <property type="expression patterns" value="baseline and differential"/>
</dbReference>
<dbReference type="GO" id="GO:0016020">
    <property type="term" value="C:membrane"/>
    <property type="evidence" value="ECO:0007669"/>
    <property type="project" value="UniProtKB-SubCell"/>
</dbReference>
<dbReference type="GO" id="GO:0016740">
    <property type="term" value="F:transferase activity"/>
    <property type="evidence" value="ECO:0007669"/>
    <property type="project" value="UniProtKB-KW"/>
</dbReference>
<dbReference type="GO" id="GO:0008270">
    <property type="term" value="F:zinc ion binding"/>
    <property type="evidence" value="ECO:0007669"/>
    <property type="project" value="UniProtKB-KW"/>
</dbReference>
<dbReference type="GO" id="GO:0016567">
    <property type="term" value="P:protein ubiquitination"/>
    <property type="evidence" value="ECO:0007669"/>
    <property type="project" value="UniProtKB-UniPathway"/>
</dbReference>
<dbReference type="Gene3D" id="3.30.40.10">
    <property type="entry name" value="Zinc/RING finger domain, C3HC4 (zinc finger)"/>
    <property type="match status" value="1"/>
</dbReference>
<dbReference type="InterPro" id="IPR053238">
    <property type="entry name" value="RING-H2_zinc_finger"/>
</dbReference>
<dbReference type="InterPro" id="IPR001841">
    <property type="entry name" value="Znf_RING"/>
</dbReference>
<dbReference type="InterPro" id="IPR013083">
    <property type="entry name" value="Znf_RING/FYVE/PHD"/>
</dbReference>
<dbReference type="PANTHER" id="PTHR14155">
    <property type="entry name" value="RING FINGER DOMAIN-CONTAINING"/>
    <property type="match status" value="1"/>
</dbReference>
<dbReference type="PANTHER" id="PTHR14155:SF478">
    <property type="entry name" value="RING-H2 FINGER PROTEIN ATL81"/>
    <property type="match status" value="1"/>
</dbReference>
<dbReference type="Pfam" id="PF13639">
    <property type="entry name" value="zf-RING_2"/>
    <property type="match status" value="1"/>
</dbReference>
<dbReference type="SMART" id="SM00184">
    <property type="entry name" value="RING"/>
    <property type="match status" value="1"/>
</dbReference>
<dbReference type="SUPFAM" id="SSF57850">
    <property type="entry name" value="RING/U-box"/>
    <property type="match status" value="1"/>
</dbReference>
<dbReference type="PROSITE" id="PS50089">
    <property type="entry name" value="ZF_RING_2"/>
    <property type="match status" value="1"/>
</dbReference>
<accession>Q9LQM2</accession>
<accession>Q1G3T2</accession>
<proteinExistence type="evidence at transcript level"/>
<protein>
    <recommendedName>
        <fullName>RING-H2 finger protein ATL81</fullName>
        <ecNumber evidence="4">2.3.2.27</ecNumber>
    </recommendedName>
    <alternativeName>
        <fullName evidence="4">RING-type E3 ubiquitin transferase ATL81</fullName>
    </alternativeName>
</protein>
<name>ATL81_ARATH</name>
<sequence length="332" mass="38390">MYDLTFLLISLFPIDITLPTRQPQNKPFLLPQATYETSHNISDPAVSLHGLKMSISTTETDNFKPVHTLVSSPVTIVLTGSLLFIIFTGFFSFFFCGCLFRKLMRIWNNHRNRNRPSNLIQPSNPPENLGLDSKIIESFPEYPYSVKDHGTDQCSICLTEFMDDDTIRLISTCNHSFHTICIDLWFEGHKTCPVCRRELDVEDRTSLEKPLEVPEIDLVRSEIHDEPLPRDTVTIIVHEEHPSTTIGSLEHTDEIESYERRMKASNLRFWRSHSTGHSIVVKTENEQEEEEEEEKDEIKIRIEISGECQFEDHKMTLPNRKLYCVRGTYSVG</sequence>
<reference key="1">
    <citation type="journal article" date="2000" name="Nature">
        <title>Sequence and analysis of chromosome 1 of the plant Arabidopsis thaliana.</title>
        <authorList>
            <person name="Theologis A."/>
            <person name="Ecker J.R."/>
            <person name="Palm C.J."/>
            <person name="Federspiel N.A."/>
            <person name="Kaul S."/>
            <person name="White O."/>
            <person name="Alonso J."/>
            <person name="Altafi H."/>
            <person name="Araujo R."/>
            <person name="Bowman C.L."/>
            <person name="Brooks S.Y."/>
            <person name="Buehler E."/>
            <person name="Chan A."/>
            <person name="Chao Q."/>
            <person name="Chen H."/>
            <person name="Cheuk R.F."/>
            <person name="Chin C.W."/>
            <person name="Chung M.K."/>
            <person name="Conn L."/>
            <person name="Conway A.B."/>
            <person name="Conway A.R."/>
            <person name="Creasy T.H."/>
            <person name="Dewar K."/>
            <person name="Dunn P."/>
            <person name="Etgu P."/>
            <person name="Feldblyum T.V."/>
            <person name="Feng J.-D."/>
            <person name="Fong B."/>
            <person name="Fujii C.Y."/>
            <person name="Gill J.E."/>
            <person name="Goldsmith A.D."/>
            <person name="Haas B."/>
            <person name="Hansen N.F."/>
            <person name="Hughes B."/>
            <person name="Huizar L."/>
            <person name="Hunter J.L."/>
            <person name="Jenkins J."/>
            <person name="Johnson-Hopson C."/>
            <person name="Khan S."/>
            <person name="Khaykin E."/>
            <person name="Kim C.J."/>
            <person name="Koo H.L."/>
            <person name="Kremenetskaia I."/>
            <person name="Kurtz D.B."/>
            <person name="Kwan A."/>
            <person name="Lam B."/>
            <person name="Langin-Hooper S."/>
            <person name="Lee A."/>
            <person name="Lee J.M."/>
            <person name="Lenz C.A."/>
            <person name="Li J.H."/>
            <person name="Li Y.-P."/>
            <person name="Lin X."/>
            <person name="Liu S.X."/>
            <person name="Liu Z.A."/>
            <person name="Luros J.S."/>
            <person name="Maiti R."/>
            <person name="Marziali A."/>
            <person name="Militscher J."/>
            <person name="Miranda M."/>
            <person name="Nguyen M."/>
            <person name="Nierman W.C."/>
            <person name="Osborne B.I."/>
            <person name="Pai G."/>
            <person name="Peterson J."/>
            <person name="Pham P.K."/>
            <person name="Rizzo M."/>
            <person name="Rooney T."/>
            <person name="Rowley D."/>
            <person name="Sakano H."/>
            <person name="Salzberg S.L."/>
            <person name="Schwartz J.R."/>
            <person name="Shinn P."/>
            <person name="Southwick A.M."/>
            <person name="Sun H."/>
            <person name="Tallon L.J."/>
            <person name="Tambunga G."/>
            <person name="Toriumi M.J."/>
            <person name="Town C.D."/>
            <person name="Utterback T."/>
            <person name="Van Aken S."/>
            <person name="Vaysberg M."/>
            <person name="Vysotskaia V.S."/>
            <person name="Walker M."/>
            <person name="Wu D."/>
            <person name="Yu G."/>
            <person name="Fraser C.M."/>
            <person name="Venter J.C."/>
            <person name="Davis R.W."/>
        </authorList>
    </citation>
    <scope>NUCLEOTIDE SEQUENCE [LARGE SCALE GENOMIC DNA]</scope>
    <source>
        <strain>cv. Columbia</strain>
    </source>
</reference>
<reference key="2">
    <citation type="journal article" date="2017" name="Plant J.">
        <title>Araport11: a complete reannotation of the Arabidopsis thaliana reference genome.</title>
        <authorList>
            <person name="Cheng C.Y."/>
            <person name="Krishnakumar V."/>
            <person name="Chan A.P."/>
            <person name="Thibaud-Nissen F."/>
            <person name="Schobel S."/>
            <person name="Town C.D."/>
        </authorList>
    </citation>
    <scope>GENOME REANNOTATION</scope>
    <source>
        <strain>cv. Columbia</strain>
    </source>
</reference>
<reference key="3">
    <citation type="journal article" date="2006" name="Plant Biotechnol. J.">
        <title>Simultaneous high-throughput recombinational cloning of open reading frames in closed and open configurations.</title>
        <authorList>
            <person name="Underwood B.A."/>
            <person name="Vanderhaeghen R."/>
            <person name="Whitford R."/>
            <person name="Town C.D."/>
            <person name="Hilson P."/>
        </authorList>
    </citation>
    <scope>NUCLEOTIDE SEQUENCE [LARGE SCALE GENOMIC DNA]</scope>
    <source>
        <strain>cv. Columbia</strain>
    </source>
</reference>
<reference key="4">
    <citation type="journal article" date="2007" name="BMC Genomics">
        <title>Experimental validation of novel genes predicted in the un-annotated regions of the Arabidopsis genome.</title>
        <authorList>
            <person name="Moskal W.A. Jr."/>
            <person name="Wu H.C."/>
            <person name="Underwood B.A."/>
            <person name="Wang W."/>
            <person name="Town C.D."/>
            <person name="Xiao Y.-L."/>
        </authorList>
    </citation>
    <scope>NUCLEOTIDE SEQUENCE [LARGE SCALE MRNA]</scope>
    <source>
        <strain>cv. Columbia</strain>
    </source>
</reference>
<reference key="5">
    <citation type="journal article" date="2002" name="Genome Biol.">
        <title>Evaluation and classification of RING-finger domains encoded by the Arabidopsis genome.</title>
        <authorList>
            <person name="Kosarev P."/>
            <person name="Mayer K.F.X."/>
            <person name="Hardtke C.S."/>
        </authorList>
    </citation>
    <scope>GENE FAMILY ORGANIZATION</scope>
</reference>
<keyword id="KW-0472">Membrane</keyword>
<keyword id="KW-0479">Metal-binding</keyword>
<keyword id="KW-1185">Reference proteome</keyword>
<keyword id="KW-0732">Signal</keyword>
<keyword id="KW-0808">Transferase</keyword>
<keyword id="KW-0812">Transmembrane</keyword>
<keyword id="KW-1133">Transmembrane helix</keyword>
<keyword id="KW-0833">Ubl conjugation pathway</keyword>
<keyword id="KW-0862">Zinc</keyword>
<keyword id="KW-0863">Zinc-finger</keyword>
<evidence type="ECO:0000250" key="1"/>
<evidence type="ECO:0000255" key="2"/>
<evidence type="ECO:0000255" key="3">
    <source>
        <dbReference type="PROSITE-ProRule" id="PRU00175"/>
    </source>
</evidence>
<evidence type="ECO:0000305" key="4"/>
<gene>
    <name type="primary">ATL81</name>
    <name type="ordered locus">At1g32361</name>
    <name type="ORF">F27G20.11</name>
    <name type="ORF">F5D14.13</name>
</gene>